<dbReference type="PIR" id="D29242">
    <property type="entry name" value="DNBEHF"/>
</dbReference>
<dbReference type="SMR" id="P17469"/>
<dbReference type="GO" id="GO:0042025">
    <property type="term" value="C:host cell nucleus"/>
    <property type="evidence" value="ECO:0007669"/>
    <property type="project" value="UniProtKB-SubCell"/>
</dbReference>
<dbReference type="GO" id="GO:0003697">
    <property type="term" value="F:single-stranded DNA binding"/>
    <property type="evidence" value="ECO:0007669"/>
    <property type="project" value="InterPro"/>
</dbReference>
<dbReference type="GO" id="GO:0008270">
    <property type="term" value="F:zinc ion binding"/>
    <property type="evidence" value="ECO:0007669"/>
    <property type="project" value="UniProtKB-KW"/>
</dbReference>
<dbReference type="GO" id="GO:0006260">
    <property type="term" value="P:DNA replication"/>
    <property type="evidence" value="ECO:0007669"/>
    <property type="project" value="UniProtKB-KW"/>
</dbReference>
<dbReference type="FunFam" id="1.20.190.40:FF:000001">
    <property type="entry name" value="Major DNA-binding protein"/>
    <property type="match status" value="1"/>
</dbReference>
<dbReference type="FunFam" id="1.20.190.40:FF:000002">
    <property type="entry name" value="Major DNA-binding protein"/>
    <property type="match status" value="1"/>
</dbReference>
<dbReference type="Gene3D" id="1.10.150.560">
    <property type="match status" value="1"/>
</dbReference>
<dbReference type="Gene3D" id="1.20.190.40">
    <property type="entry name" value="Viral ssDNA binding protein, head domain"/>
    <property type="match status" value="2"/>
</dbReference>
<dbReference type="HAMAP" id="MF_04007">
    <property type="entry name" value="HSV_DNBI"/>
    <property type="match status" value="1"/>
</dbReference>
<dbReference type="InterPro" id="IPR035989">
    <property type="entry name" value="DBP_sf"/>
</dbReference>
<dbReference type="InterPro" id="IPR043031">
    <property type="entry name" value="Viral_ssDBP_head"/>
</dbReference>
<dbReference type="InterPro" id="IPR000635">
    <property type="entry name" value="Viral_ssDNA-bd"/>
</dbReference>
<dbReference type="Pfam" id="PF00747">
    <property type="entry name" value="Viral_DNA_bp"/>
    <property type="match status" value="1"/>
</dbReference>
<dbReference type="SUPFAM" id="SSF118208">
    <property type="entry name" value="Viral ssDNA binding protein"/>
    <property type="match status" value="1"/>
</dbReference>
<proteinExistence type="inferred from homology"/>
<feature type="chain" id="PRO_0000115744" description="Major DNA-binding protein">
    <location>
        <begin position="1"/>
        <end position="1196"/>
    </location>
</feature>
<feature type="zinc finger region" evidence="1">
    <location>
        <begin position="499"/>
        <end position="512"/>
    </location>
</feature>
<feature type="region of interest" description="Disordered" evidence="2">
    <location>
        <begin position="1158"/>
        <end position="1196"/>
    </location>
</feature>
<feature type="region of interest" description="Required for nuclear localization" evidence="1">
    <location>
        <begin position="1170"/>
        <end position="1196"/>
    </location>
</feature>
<feature type="short sequence motif" description="Required for filament formation" evidence="1">
    <location>
        <begin position="843"/>
        <end position="844"/>
    </location>
</feature>
<feature type="short sequence motif" description="Required for filament formation" evidence="1">
    <location>
        <begin position="1142"/>
        <end position="1144"/>
    </location>
</feature>
<feature type="compositionally biased region" description="Basic and acidic residues" evidence="2">
    <location>
        <begin position="1174"/>
        <end position="1196"/>
    </location>
</feature>
<evidence type="ECO:0000255" key="1">
    <source>
        <dbReference type="HAMAP-Rule" id="MF_04007"/>
    </source>
</evidence>
<evidence type="ECO:0000256" key="2">
    <source>
        <dbReference type="SAM" id="MobiDB-lite"/>
    </source>
</evidence>
<reference key="1">
    <citation type="journal article" date="1988" name="Virology">
        <title>Conservation of a gene cluster including glycoprotein B in bovine herpesvirus type 2 (BHV-2) and herpes simplex virus type 1 (HSV-1).</title>
        <authorList>
            <person name="Hammerschmidt W."/>
            <person name="Conraths F."/>
            <person name="Mankertz J."/>
            <person name="Pauli G."/>
            <person name="Ludwig H."/>
            <person name="Buhk H.-J."/>
        </authorList>
    </citation>
    <scope>NUCLEOTIDE SEQUENCE [GENOMIC DNA]</scope>
</reference>
<accession>P17469</accession>
<keyword id="KW-0235">DNA replication</keyword>
<keyword id="KW-0238">DNA-binding</keyword>
<keyword id="KW-1048">Host nucleus</keyword>
<keyword id="KW-0479">Metal-binding</keyword>
<keyword id="KW-0862">Zinc</keyword>
<keyword id="KW-0863">Zinc-finger</keyword>
<comment type="function">
    <text evidence="1">Plays several crucial roles in viral infection. Participates in the opening of the viral DNA origin to initiate replication by interacting with the origin-binding protein. May disrupt loops, hairpins and other secondary structures present on ssDNA to reduce and eliminate pausing of viral DNA polymerase at specific sites during elongation. Promotes viral DNA recombination by performing strand-transfer, characterized by the ability to transfer a DNA strand from a linear duplex to a complementary single-stranded DNA circle. Can also catalyze the renaturation of complementary single strands. Additionally, reorganizes the host cell nucleus, leading to the formation of prereplicative sites and replication compartments. This process is driven by the protein which can form double-helical filaments in the absence of DNA.</text>
</comment>
<comment type="subunit">
    <text evidence="1">Homooligomers. Forms double-helical filaments necessary for the formation of replication compartments within the host nucleus. Interacts with the origin-binding protein. Interacts with the helicase primase complex; this interaction stimulates primer synthesis activity of the helicase-primase complex. Interacts with the DNA polymerase. Interacts with the alkaline exonuclease; this interaction increases its nuclease processivity.</text>
</comment>
<comment type="subcellular location">
    <subcellularLocation>
        <location evidence="1">Host nucleus</location>
    </subcellularLocation>
    <text evidence="1">In the absence of DNA replication, found in the nuclear framework-associated structures (prereplicative sites). As viral DNA replication proceeds, it migrates to globular intranuclear structures (replication compartments).</text>
</comment>
<comment type="similarity">
    <text evidence="1">Belongs to the herpesviridae major DNA-binding protein family.</text>
</comment>
<sequence>METKPKTATTIKVPPGPLGYVYARACPSEGIELLALLSARSGDSDVAVAPLVVGLTVESGFEANVAVVVGSRTTGLGGTAVSLKLTPSHYSSSVYVFHGGRHLDPSTQAPNLTRLCERARRHFGFSDYTPRPGDLKHETTGEALCERLGLDPDRALLYLVVTEGFKEAVSINNTFLHLGGSDKVTIGGAEVHRIPVYPLQLFMPDFSRVIAEPFNANHRSIGEKFTYPLPFFNRPLNRLLFEAVVGPAAVALRCRNVDAVARAAAHLAFDENHEGAALPADITFTAFEASQGKTPRGERDGGGKGAAGGFEQRLASVMAGDAALALESIVSMAVFDEPPTDISAWPLFEGQDTAAARANAVGAYLARAAGLVGAMVFSTNSALHLTEVDDAGPADPKDHSKPSFYRFFLVPGTHVAANPQVDREGHVVPGFEGRPTAPLVGGTQEFAGEHLAMLCGFSPALLAKMLFYLERCDGAVIVGRQEMDVFRYVADSNQTDVPCNLCTFDTRHACVHTTLMRLRARHPKFASAARGAIGVFGTMNSMYSDCDVLGNYAAFSALKRADGSETARTIMQETYRAATERVMAELETLQYVDQAVPTAMGRLETIITNREALHTVVNNVRQVVDREVEQLMRNLVEGRNFKFRDGLGEANHAMSLTLDPYACGPCPLLQLLGRRSNLAVYQDLALSQCHGVFAGQSVEGRNFRNQFQPVLRRRVMDMFNNGFLSAKTLTVALSEGAAICAPSLTAGQTAPAESSFEGDVARVTLGFPKELRVKSRVLFAGASANASEAAKARVASLQSAYQKPDKRVDILLGPLGFLLKQFHAAIFPNGKPPGSNQPNPQWFWTALQRNQLPARLLSREDIETIAFIKKFSLDYGAINFINLAPNNVSELAMYYMANQILRYCDHSTYFINTLTAIIAGSRRPPSVQAAAAWSAQGGAGLEAGARALVDAVDAHPGAWTSMFASCNLLRPVMAARPMVVLGLSISKYYGMAGNDRVFQAGNWASLMGGKNACPLLIFDRTRKFVLACPRAGFVCAASSLGGGAHESSLCEQLRGIISEGGAAVASSVFVATVKSLGPRTQQLQIEDWLALLEDEYLSEEMMELTARALERGNGEWSTDAALEVAHEAEALVSQLGNAGEVFNFGDFGCEDDNATPFGGPGAPGPAFAGRKRAFHGDDPFGEGPPDKKGDLTLDML</sequence>
<organismHost>
    <name type="scientific">Homo sapiens</name>
    <name type="common">Human</name>
    <dbReference type="NCBI Taxonomy" id="9606"/>
</organismHost>
<protein>
    <recommendedName>
        <fullName evidence="1">Major DNA-binding protein</fullName>
    </recommendedName>
</protein>
<organism>
    <name type="scientific">Human herpesvirus 1 (strain F)</name>
    <name type="common">HHV-1</name>
    <name type="synonym">Human herpes simplex virus 1</name>
    <dbReference type="NCBI Taxonomy" id="10304"/>
    <lineage>
        <taxon>Viruses</taxon>
        <taxon>Duplodnaviria</taxon>
        <taxon>Heunggongvirae</taxon>
        <taxon>Peploviricota</taxon>
        <taxon>Herviviricetes</taxon>
        <taxon>Herpesvirales</taxon>
        <taxon>Orthoherpesviridae</taxon>
        <taxon>Alphaherpesvirinae</taxon>
        <taxon>Simplexvirus</taxon>
        <taxon>Simplexvirus humanalpha1</taxon>
        <taxon>Human herpesvirus 1</taxon>
    </lineage>
</organism>
<gene>
    <name evidence="1" type="primary">DBP</name>
    <name type="synonym">ICP8</name>
    <name type="ORF">UL29</name>
</gene>
<name>DNBI_HHV1F</name>